<comment type="function">
    <text evidence="1">Involved in the catabolism of homogentisate (2,5-dihydroxyphenylacetate or 2,5-OH-PhAc), a central intermediate in the degradation of phenylalanine and tyrosine. Catalyzes the oxidative ring cleavage of the aromatic ring of homogentisate to yield maleylacetoacetate.</text>
</comment>
<comment type="catalytic activity">
    <reaction evidence="1">
        <text>homogentisate + O2 = 4-maleylacetoacetate + H(+)</text>
        <dbReference type="Rhea" id="RHEA:15449"/>
        <dbReference type="ChEBI" id="CHEBI:15378"/>
        <dbReference type="ChEBI" id="CHEBI:15379"/>
        <dbReference type="ChEBI" id="CHEBI:16169"/>
        <dbReference type="ChEBI" id="CHEBI:17105"/>
        <dbReference type="EC" id="1.13.11.5"/>
    </reaction>
</comment>
<comment type="cofactor">
    <cofactor evidence="1">
        <name>Fe cation</name>
        <dbReference type="ChEBI" id="CHEBI:24875"/>
    </cofactor>
</comment>
<comment type="pathway">
    <text evidence="1">Amino-acid degradation; L-phenylalanine degradation; acetoacetate and fumarate from L-phenylalanine: step 4/6.</text>
</comment>
<comment type="subunit">
    <text evidence="1">Hexamer; dimer of trimers.</text>
</comment>
<comment type="similarity">
    <text evidence="1">Belongs to the homogentisate dioxygenase family.</text>
</comment>
<name>HGD_BURM7</name>
<keyword id="KW-0223">Dioxygenase</keyword>
<keyword id="KW-0408">Iron</keyword>
<keyword id="KW-0479">Metal-binding</keyword>
<keyword id="KW-0560">Oxidoreductase</keyword>
<keyword id="KW-0585">Phenylalanine catabolism</keyword>
<keyword id="KW-0828">Tyrosine catabolism</keyword>
<sequence>MERTTIMTLDFSKPGEAGYQSGFANEFATEALPGALPHARNSPQRAPYGLYAEQFSGTAFTAPRGHNRRSWLYRIRPAAVHRPFELVSGERRIVAEFGDSDDVPPTPPNQLRWDPLPMPAQPTDFVDGWVTMAGNGSAAAMSGCAIHLYAANRSMRERFFYSADGELLIVPQEGRLFIMTELGRLDVEPFEIAVIPRGVRFAVALPDGRARGYVCENFGALLRLPDLGPIGSNGLANPRDFLTPHASYEDREGAFELVAKLNGRLWRADIDHSPFDVVAWHGNYAPYKYDLRHFNTIGSISYDHPDPSIFLVLQSQSDTPGVDAIDFVIFPPRWLAAEDTFRPPWFHRNVASEFMGLVHGVYDAKAEGFVPGGASLHNCMSGHGPDADTFEKASSIDTSKPNKVGDTMAFMFETRTLIRPTRFALDTAQLQANYFECWQGLKKHFNPEQR</sequence>
<organism>
    <name type="scientific">Burkholderia mallei (strain NCTC 10247)</name>
    <dbReference type="NCBI Taxonomy" id="320389"/>
    <lineage>
        <taxon>Bacteria</taxon>
        <taxon>Pseudomonadati</taxon>
        <taxon>Pseudomonadota</taxon>
        <taxon>Betaproteobacteria</taxon>
        <taxon>Burkholderiales</taxon>
        <taxon>Burkholderiaceae</taxon>
        <taxon>Burkholderia</taxon>
        <taxon>pseudomallei group</taxon>
    </lineage>
</organism>
<reference key="1">
    <citation type="journal article" date="2010" name="Genome Biol. Evol.">
        <title>Continuing evolution of Burkholderia mallei through genome reduction and large-scale rearrangements.</title>
        <authorList>
            <person name="Losada L."/>
            <person name="Ronning C.M."/>
            <person name="DeShazer D."/>
            <person name="Woods D."/>
            <person name="Fedorova N."/>
            <person name="Kim H.S."/>
            <person name="Shabalina S.A."/>
            <person name="Pearson T.R."/>
            <person name="Brinkac L."/>
            <person name="Tan P."/>
            <person name="Nandi T."/>
            <person name="Crabtree J."/>
            <person name="Badger J."/>
            <person name="Beckstrom-Sternberg S."/>
            <person name="Saqib M."/>
            <person name="Schutzer S.E."/>
            <person name="Keim P."/>
            <person name="Nierman W.C."/>
        </authorList>
    </citation>
    <scope>NUCLEOTIDE SEQUENCE [LARGE SCALE GENOMIC DNA]</scope>
    <source>
        <strain>NCTC 10247</strain>
    </source>
</reference>
<proteinExistence type="inferred from homology"/>
<feature type="chain" id="PRO_1000019524" description="Homogentisate 1,2-dioxygenase">
    <location>
        <begin position="1"/>
        <end position="450"/>
    </location>
</feature>
<feature type="active site" description="Proton acceptor" evidence="1">
    <location>
        <position position="304"/>
    </location>
</feature>
<feature type="binding site" evidence="1">
    <location>
        <position position="347"/>
    </location>
    <ligand>
        <name>Fe cation</name>
        <dbReference type="ChEBI" id="CHEBI:24875"/>
    </ligand>
</feature>
<feature type="binding site" evidence="1">
    <location>
        <position position="353"/>
    </location>
    <ligand>
        <name>Fe cation</name>
        <dbReference type="ChEBI" id="CHEBI:24875"/>
    </ligand>
</feature>
<feature type="binding site" evidence="1">
    <location>
        <position position="362"/>
    </location>
    <ligand>
        <name>homogentisate</name>
        <dbReference type="ChEBI" id="CHEBI:16169"/>
    </ligand>
</feature>
<feature type="binding site" evidence="1">
    <location>
        <position position="383"/>
    </location>
    <ligand>
        <name>Fe cation</name>
        <dbReference type="ChEBI" id="CHEBI:24875"/>
    </ligand>
</feature>
<feature type="binding site" evidence="1">
    <location>
        <position position="383"/>
    </location>
    <ligand>
        <name>homogentisate</name>
        <dbReference type="ChEBI" id="CHEBI:16169"/>
    </ligand>
</feature>
<evidence type="ECO:0000255" key="1">
    <source>
        <dbReference type="HAMAP-Rule" id="MF_00334"/>
    </source>
</evidence>
<accession>A3MMH2</accession>
<gene>
    <name evidence="1" type="primary">hmgA</name>
    <name type="ordered locus">BMA10247_1921</name>
</gene>
<dbReference type="EC" id="1.13.11.5" evidence="1"/>
<dbReference type="EMBL" id="CP000548">
    <property type="protein sequence ID" value="ABO04335.1"/>
    <property type="molecule type" value="Genomic_DNA"/>
</dbReference>
<dbReference type="SMR" id="A3MMH2"/>
<dbReference type="KEGG" id="bmn:BMA10247_1921"/>
<dbReference type="UniPathway" id="UPA00139">
    <property type="reaction ID" value="UER00339"/>
</dbReference>
<dbReference type="GO" id="GO:0005737">
    <property type="term" value="C:cytoplasm"/>
    <property type="evidence" value="ECO:0007669"/>
    <property type="project" value="TreeGrafter"/>
</dbReference>
<dbReference type="GO" id="GO:0004411">
    <property type="term" value="F:homogentisate 1,2-dioxygenase activity"/>
    <property type="evidence" value="ECO:0007669"/>
    <property type="project" value="UniProtKB-UniRule"/>
</dbReference>
<dbReference type="GO" id="GO:0005506">
    <property type="term" value="F:iron ion binding"/>
    <property type="evidence" value="ECO:0007669"/>
    <property type="project" value="UniProtKB-UniRule"/>
</dbReference>
<dbReference type="GO" id="GO:0006559">
    <property type="term" value="P:L-phenylalanine catabolic process"/>
    <property type="evidence" value="ECO:0007669"/>
    <property type="project" value="UniProtKB-UniRule"/>
</dbReference>
<dbReference type="GO" id="GO:0006572">
    <property type="term" value="P:tyrosine catabolic process"/>
    <property type="evidence" value="ECO:0007669"/>
    <property type="project" value="UniProtKB-UniRule"/>
</dbReference>
<dbReference type="CDD" id="cd07000">
    <property type="entry name" value="cupin_HGO_N"/>
    <property type="match status" value="1"/>
</dbReference>
<dbReference type="FunFam" id="2.60.120.10:FF:000034">
    <property type="entry name" value="Homogentisate 1,2-dioxygenase"/>
    <property type="match status" value="1"/>
</dbReference>
<dbReference type="Gene3D" id="2.60.120.10">
    <property type="entry name" value="Jelly Rolls"/>
    <property type="match status" value="1"/>
</dbReference>
<dbReference type="HAMAP" id="MF_00334">
    <property type="entry name" value="Homogentis_dioxygen"/>
    <property type="match status" value="1"/>
</dbReference>
<dbReference type="InterPro" id="IPR046451">
    <property type="entry name" value="HgmA_C"/>
</dbReference>
<dbReference type="InterPro" id="IPR046452">
    <property type="entry name" value="HgmA_N"/>
</dbReference>
<dbReference type="InterPro" id="IPR005708">
    <property type="entry name" value="Homogentis_dOase"/>
</dbReference>
<dbReference type="InterPro" id="IPR022950">
    <property type="entry name" value="Homogentis_dOase_bac"/>
</dbReference>
<dbReference type="InterPro" id="IPR014710">
    <property type="entry name" value="RmlC-like_jellyroll"/>
</dbReference>
<dbReference type="InterPro" id="IPR011051">
    <property type="entry name" value="RmlC_Cupin_sf"/>
</dbReference>
<dbReference type="NCBIfam" id="TIGR01015">
    <property type="entry name" value="hmgA"/>
    <property type="match status" value="1"/>
</dbReference>
<dbReference type="PANTHER" id="PTHR11056">
    <property type="entry name" value="HOMOGENTISATE 1,2-DIOXYGENASE"/>
    <property type="match status" value="1"/>
</dbReference>
<dbReference type="PANTHER" id="PTHR11056:SF0">
    <property type="entry name" value="HOMOGENTISATE 1,2-DIOXYGENASE"/>
    <property type="match status" value="1"/>
</dbReference>
<dbReference type="Pfam" id="PF04209">
    <property type="entry name" value="HgmA_C"/>
    <property type="match status" value="1"/>
</dbReference>
<dbReference type="Pfam" id="PF20510">
    <property type="entry name" value="HgmA_N"/>
    <property type="match status" value="1"/>
</dbReference>
<dbReference type="SUPFAM" id="SSF51182">
    <property type="entry name" value="RmlC-like cupins"/>
    <property type="match status" value="1"/>
</dbReference>
<protein>
    <recommendedName>
        <fullName evidence="1">Homogentisate 1,2-dioxygenase</fullName>
        <shortName evidence="1">HGDO</shortName>
        <ecNumber evidence="1">1.13.11.5</ecNumber>
    </recommendedName>
    <alternativeName>
        <fullName evidence="1">Homogentisate oxygenase</fullName>
    </alternativeName>
    <alternativeName>
        <fullName evidence="1">Homogentisic acid oxidase</fullName>
    </alternativeName>
    <alternativeName>
        <fullName evidence="1">Homogentisicase</fullName>
    </alternativeName>
</protein>